<name>APT_NITEU</name>
<keyword id="KW-0963">Cytoplasm</keyword>
<keyword id="KW-0328">Glycosyltransferase</keyword>
<keyword id="KW-0660">Purine salvage</keyword>
<keyword id="KW-1185">Reference proteome</keyword>
<keyword id="KW-0808">Transferase</keyword>
<sequence>MSIKSRIRTIPHYPHEGIMFRDITTLLKDPAGLRSTIDGIVQRYQTEKIDKVVGIESRGFIIAAPVAYALSAGFVPVRKQGKLPAETIGCDYQLEYGYDKVEIHVDAIDKGDRVLLIDDLIATGGTMEAAIKLVQEAGGEVIECCFVIDLPDIGGSRRLRQQGHRLFSLCSFED</sequence>
<protein>
    <recommendedName>
        <fullName evidence="1">Adenine phosphoribosyltransferase</fullName>
        <shortName evidence="1">APRT</shortName>
        <ecNumber evidence="1">2.4.2.7</ecNumber>
    </recommendedName>
</protein>
<proteinExistence type="inferred from homology"/>
<evidence type="ECO:0000255" key="1">
    <source>
        <dbReference type="HAMAP-Rule" id="MF_00004"/>
    </source>
</evidence>
<feature type="chain" id="PRO_0000149423" description="Adenine phosphoribosyltransferase">
    <location>
        <begin position="1"/>
        <end position="174"/>
    </location>
</feature>
<accession>Q82XS2</accession>
<dbReference type="EC" id="2.4.2.7" evidence="1"/>
<dbReference type="EMBL" id="AL954747">
    <property type="protein sequence ID" value="CAD84092.1"/>
    <property type="molecule type" value="Genomic_DNA"/>
</dbReference>
<dbReference type="RefSeq" id="WP_011110826.1">
    <property type="nucleotide sequence ID" value="NC_004757.1"/>
</dbReference>
<dbReference type="SMR" id="Q82XS2"/>
<dbReference type="STRING" id="228410.NE0181"/>
<dbReference type="GeneID" id="87103389"/>
<dbReference type="KEGG" id="neu:NE0181"/>
<dbReference type="eggNOG" id="COG0503">
    <property type="taxonomic scope" value="Bacteria"/>
</dbReference>
<dbReference type="HOGENOM" id="CLU_063339_3_0_4"/>
<dbReference type="OrthoDB" id="9803963at2"/>
<dbReference type="PhylomeDB" id="Q82XS2"/>
<dbReference type="UniPathway" id="UPA00588">
    <property type="reaction ID" value="UER00646"/>
</dbReference>
<dbReference type="Proteomes" id="UP000001416">
    <property type="component" value="Chromosome"/>
</dbReference>
<dbReference type="GO" id="GO:0005737">
    <property type="term" value="C:cytoplasm"/>
    <property type="evidence" value="ECO:0007669"/>
    <property type="project" value="UniProtKB-SubCell"/>
</dbReference>
<dbReference type="GO" id="GO:0003999">
    <property type="term" value="F:adenine phosphoribosyltransferase activity"/>
    <property type="evidence" value="ECO:0007669"/>
    <property type="project" value="UniProtKB-UniRule"/>
</dbReference>
<dbReference type="GO" id="GO:0006168">
    <property type="term" value="P:adenine salvage"/>
    <property type="evidence" value="ECO:0007669"/>
    <property type="project" value="InterPro"/>
</dbReference>
<dbReference type="GO" id="GO:0044209">
    <property type="term" value="P:AMP salvage"/>
    <property type="evidence" value="ECO:0007669"/>
    <property type="project" value="UniProtKB-UniRule"/>
</dbReference>
<dbReference type="GO" id="GO:0006166">
    <property type="term" value="P:purine ribonucleoside salvage"/>
    <property type="evidence" value="ECO:0007669"/>
    <property type="project" value="UniProtKB-KW"/>
</dbReference>
<dbReference type="CDD" id="cd06223">
    <property type="entry name" value="PRTases_typeI"/>
    <property type="match status" value="1"/>
</dbReference>
<dbReference type="FunFam" id="3.40.50.2020:FF:000021">
    <property type="entry name" value="Adenine phosphoribosyltransferase"/>
    <property type="match status" value="1"/>
</dbReference>
<dbReference type="Gene3D" id="3.40.50.2020">
    <property type="match status" value="1"/>
</dbReference>
<dbReference type="HAMAP" id="MF_00004">
    <property type="entry name" value="Aden_phosphoribosyltr"/>
    <property type="match status" value="1"/>
</dbReference>
<dbReference type="InterPro" id="IPR005764">
    <property type="entry name" value="Ade_phspho_trans"/>
</dbReference>
<dbReference type="InterPro" id="IPR050120">
    <property type="entry name" value="Adenine_PRTase"/>
</dbReference>
<dbReference type="InterPro" id="IPR000836">
    <property type="entry name" value="PRibTrfase_dom"/>
</dbReference>
<dbReference type="InterPro" id="IPR029057">
    <property type="entry name" value="PRTase-like"/>
</dbReference>
<dbReference type="NCBIfam" id="TIGR01090">
    <property type="entry name" value="apt"/>
    <property type="match status" value="1"/>
</dbReference>
<dbReference type="NCBIfam" id="NF002634">
    <property type="entry name" value="PRK02304.1-3"/>
    <property type="match status" value="1"/>
</dbReference>
<dbReference type="NCBIfam" id="NF002636">
    <property type="entry name" value="PRK02304.1-5"/>
    <property type="match status" value="1"/>
</dbReference>
<dbReference type="PANTHER" id="PTHR11776">
    <property type="entry name" value="ADENINE PHOSPHORIBOSYLTRANSFERASE"/>
    <property type="match status" value="1"/>
</dbReference>
<dbReference type="PANTHER" id="PTHR11776:SF7">
    <property type="entry name" value="PHOSPHORIBOSYLTRANSFERASE DOMAIN-CONTAINING PROTEIN"/>
    <property type="match status" value="1"/>
</dbReference>
<dbReference type="Pfam" id="PF00156">
    <property type="entry name" value="Pribosyltran"/>
    <property type="match status" value="1"/>
</dbReference>
<dbReference type="SUPFAM" id="SSF53271">
    <property type="entry name" value="PRTase-like"/>
    <property type="match status" value="1"/>
</dbReference>
<dbReference type="PROSITE" id="PS00103">
    <property type="entry name" value="PUR_PYR_PR_TRANSFER"/>
    <property type="match status" value="1"/>
</dbReference>
<organism>
    <name type="scientific">Nitrosomonas europaea (strain ATCC 19718 / CIP 103999 / KCTC 2705 / NBRC 14298)</name>
    <dbReference type="NCBI Taxonomy" id="228410"/>
    <lineage>
        <taxon>Bacteria</taxon>
        <taxon>Pseudomonadati</taxon>
        <taxon>Pseudomonadota</taxon>
        <taxon>Betaproteobacteria</taxon>
        <taxon>Nitrosomonadales</taxon>
        <taxon>Nitrosomonadaceae</taxon>
        <taxon>Nitrosomonas</taxon>
    </lineage>
</organism>
<reference key="1">
    <citation type="journal article" date="2003" name="J. Bacteriol.">
        <title>Complete genome sequence of the ammonia-oxidizing bacterium and obligate chemolithoautotroph Nitrosomonas europaea.</title>
        <authorList>
            <person name="Chain P."/>
            <person name="Lamerdin J.E."/>
            <person name="Larimer F.W."/>
            <person name="Regala W."/>
            <person name="Lao V."/>
            <person name="Land M.L."/>
            <person name="Hauser L."/>
            <person name="Hooper A.B."/>
            <person name="Klotz M.G."/>
            <person name="Norton J."/>
            <person name="Sayavedra-Soto L.A."/>
            <person name="Arciero D.M."/>
            <person name="Hommes N.G."/>
            <person name="Whittaker M.M."/>
            <person name="Arp D.J."/>
        </authorList>
    </citation>
    <scope>NUCLEOTIDE SEQUENCE [LARGE SCALE GENOMIC DNA]</scope>
    <source>
        <strain>ATCC 19718 / CIP 103999 / KCTC 2705 / NBRC 14298</strain>
    </source>
</reference>
<comment type="function">
    <text evidence="1">Catalyzes a salvage reaction resulting in the formation of AMP, that is energically less costly than de novo synthesis.</text>
</comment>
<comment type="catalytic activity">
    <reaction evidence="1">
        <text>AMP + diphosphate = 5-phospho-alpha-D-ribose 1-diphosphate + adenine</text>
        <dbReference type="Rhea" id="RHEA:16609"/>
        <dbReference type="ChEBI" id="CHEBI:16708"/>
        <dbReference type="ChEBI" id="CHEBI:33019"/>
        <dbReference type="ChEBI" id="CHEBI:58017"/>
        <dbReference type="ChEBI" id="CHEBI:456215"/>
        <dbReference type="EC" id="2.4.2.7"/>
    </reaction>
</comment>
<comment type="pathway">
    <text evidence="1">Purine metabolism; AMP biosynthesis via salvage pathway; AMP from adenine: step 1/1.</text>
</comment>
<comment type="subunit">
    <text evidence="1">Homodimer.</text>
</comment>
<comment type="subcellular location">
    <subcellularLocation>
        <location evidence="1">Cytoplasm</location>
    </subcellularLocation>
</comment>
<comment type="similarity">
    <text evidence="1">Belongs to the purine/pyrimidine phosphoribosyltransferase family.</text>
</comment>
<gene>
    <name evidence="1" type="primary">apt</name>
    <name type="ordered locus">NE0181</name>
</gene>